<organism>
    <name type="scientific">Samia cynthia</name>
    <name type="common">Ailanthus silkmoth</name>
    <name type="synonym">Phalaena cynthia</name>
    <dbReference type="NCBI Taxonomy" id="7127"/>
    <lineage>
        <taxon>Eukaryota</taxon>
        <taxon>Metazoa</taxon>
        <taxon>Ecdysozoa</taxon>
        <taxon>Arthropoda</taxon>
        <taxon>Hexapoda</taxon>
        <taxon>Insecta</taxon>
        <taxon>Pterygota</taxon>
        <taxon>Neoptera</taxon>
        <taxon>Endopterygota</taxon>
        <taxon>Lepidoptera</taxon>
        <taxon>Glossata</taxon>
        <taxon>Ditrysia</taxon>
        <taxon>Bombycoidea</taxon>
        <taxon>Saturniidae</taxon>
        <taxon>Saturniinae</taxon>
        <taxon>Attacini</taxon>
        <taxon>Samia</taxon>
    </lineage>
</organism>
<keyword id="KW-0165">Cleavage on pair of basic residues</keyword>
<keyword id="KW-1015">Disulfide bond</keyword>
<keyword id="KW-0372">Hormone</keyword>
<keyword id="KW-0964">Secreted</keyword>
<keyword id="KW-0732">Signal</keyword>
<accession>P33719</accession>
<evidence type="ECO:0000250" key="1"/>
<evidence type="ECO:0000305" key="2"/>
<gene>
    <name type="primary">SBXA2</name>
</gene>
<dbReference type="EMBL" id="D13924">
    <property type="protein sequence ID" value="BAA03021.1"/>
    <property type="molecule type" value="Genomic_DNA"/>
</dbReference>
<dbReference type="PIR" id="JQ0904">
    <property type="entry name" value="JQ0904"/>
</dbReference>
<dbReference type="GO" id="GO:0005615">
    <property type="term" value="C:extracellular space"/>
    <property type="evidence" value="ECO:0007669"/>
    <property type="project" value="InterPro"/>
</dbReference>
<dbReference type="GO" id="GO:0008083">
    <property type="term" value="F:growth factor activity"/>
    <property type="evidence" value="ECO:0007669"/>
    <property type="project" value="InterPro"/>
</dbReference>
<dbReference type="GO" id="GO:0005179">
    <property type="term" value="F:hormone activity"/>
    <property type="evidence" value="ECO:0007669"/>
    <property type="project" value="UniProtKB-KW"/>
</dbReference>
<dbReference type="CDD" id="cd04366">
    <property type="entry name" value="IlGF_insulin_bombyxin_like"/>
    <property type="match status" value="1"/>
</dbReference>
<dbReference type="Gene3D" id="1.10.100.10">
    <property type="entry name" value="Insulin-like"/>
    <property type="match status" value="1"/>
</dbReference>
<dbReference type="InterPro" id="IPR017097">
    <property type="entry name" value="Bombyxin"/>
</dbReference>
<dbReference type="InterPro" id="IPR016179">
    <property type="entry name" value="Insulin-like"/>
</dbReference>
<dbReference type="InterPro" id="IPR036438">
    <property type="entry name" value="Insulin-like_sf"/>
</dbReference>
<dbReference type="InterPro" id="IPR022353">
    <property type="entry name" value="Insulin_CS"/>
</dbReference>
<dbReference type="InterPro" id="IPR022352">
    <property type="entry name" value="Insulin_family"/>
</dbReference>
<dbReference type="PANTHER" id="PTHR13647:SF4">
    <property type="entry name" value="INSULIN-LIKE PEPTIDE 1-RELATED"/>
    <property type="match status" value="1"/>
</dbReference>
<dbReference type="PANTHER" id="PTHR13647">
    <property type="entry name" value="INSULIN-LIKE PEPTIDE 2-RELATED"/>
    <property type="match status" value="1"/>
</dbReference>
<dbReference type="Pfam" id="PF00049">
    <property type="entry name" value="Insulin"/>
    <property type="match status" value="1"/>
</dbReference>
<dbReference type="PIRSF" id="PIRSF037038">
    <property type="entry name" value="Bombyxin"/>
    <property type="match status" value="1"/>
</dbReference>
<dbReference type="PRINTS" id="PR00276">
    <property type="entry name" value="INSULINFAMLY"/>
</dbReference>
<dbReference type="SMART" id="SM00078">
    <property type="entry name" value="IlGF"/>
    <property type="match status" value="1"/>
</dbReference>
<dbReference type="SUPFAM" id="SSF56994">
    <property type="entry name" value="Insulin-like"/>
    <property type="match status" value="1"/>
</dbReference>
<dbReference type="PROSITE" id="PS00262">
    <property type="entry name" value="INSULIN"/>
    <property type="match status" value="1"/>
</dbReference>
<sequence length="100" mass="11641">MRTQVLFLIVVLAVMASGDDTAHVYCGRRLATMLLYVCDNQYQVKRPPYISSENEGYGWKWLERQRARQLDEARGKRQGIVEECCNKPCTENELLGYCYK</sequence>
<comment type="function">
    <text>Brain peptide responsible for activation of prothoracic glands to produce ecdysone in insects.</text>
</comment>
<comment type="subunit">
    <text>Heterodimer of a B chain and an A chain linked by two disulfide bonds.</text>
</comment>
<comment type="subcellular location">
    <subcellularLocation>
        <location>Secreted</location>
    </subcellularLocation>
</comment>
<comment type="similarity">
    <text evidence="2">Belongs to the insulin family.</text>
</comment>
<name>BXA2_SAMCY</name>
<proteinExistence type="inferred from homology"/>
<reference key="1">
    <citation type="journal article" date="1992" name="Gen. Comp. Endocrinol.">
        <title>Structure and expression of bombyxin-related peptide genes of the moth Samia cynthia ricini.</title>
        <authorList>
            <person name="Kimura-Kawakami M."/>
            <person name="Iwami M."/>
            <person name="Kawakami A."/>
            <person name="Nagasawa H."/>
            <person name="Suzuki A."/>
            <person name="Ishizaki H."/>
        </authorList>
    </citation>
    <scope>NUCLEOTIDE SEQUENCE [GENOMIC DNA]</scope>
</reference>
<protein>
    <recommendedName>
        <fullName>Bombyxin A-2 homolog</fullName>
    </recommendedName>
    <component>
        <recommendedName>
            <fullName>Bombyxin A-2 homolog B chain</fullName>
        </recommendedName>
    </component>
    <component>
        <recommendedName>
            <fullName>Bombyxin A-2 homolog A chain</fullName>
        </recommendedName>
    </component>
</protein>
<feature type="signal peptide" evidence="1">
    <location>
        <begin position="1"/>
        <end position="18"/>
    </location>
</feature>
<feature type="peptide" id="PRO_0000016046" description="Bombyxin A-2 homolog B chain">
    <location>
        <begin position="19"/>
        <end position="44"/>
    </location>
</feature>
<feature type="propeptide" id="PRO_0000016047" description="C peptide like">
    <location>
        <begin position="47"/>
        <end position="75"/>
    </location>
</feature>
<feature type="peptide" id="PRO_0000016048" description="Bombyxin A-2 homolog A chain">
    <location>
        <begin position="78"/>
        <end position="100"/>
    </location>
</feature>
<feature type="disulfide bond" description="Interchain (between B and A chains)" evidence="1">
    <location>
        <begin position="26"/>
        <end position="85"/>
    </location>
</feature>
<feature type="disulfide bond" description="Interchain (between B and A chains)" evidence="1">
    <location>
        <begin position="38"/>
        <end position="98"/>
    </location>
</feature>
<feature type="disulfide bond" evidence="1">
    <location>
        <begin position="84"/>
        <end position="89"/>
    </location>
</feature>